<proteinExistence type="evidence at transcript level"/>
<keyword id="KW-0134">Cell wall</keyword>
<keyword id="KW-0961">Cell wall biogenesis/degradation</keyword>
<keyword id="KW-1015">Disulfide bond</keyword>
<keyword id="KW-0472">Membrane</keyword>
<keyword id="KW-1185">Reference proteome</keyword>
<keyword id="KW-0964">Secreted</keyword>
<keyword id="KW-0732">Signal</keyword>
<feature type="signal peptide" evidence="2">
    <location>
        <begin position="1"/>
        <end position="28"/>
    </location>
</feature>
<feature type="chain" id="PRO_0000251980" description="Expansin-A1">
    <location>
        <begin position="29"/>
        <end position="261"/>
    </location>
</feature>
<feature type="domain" description="Expansin-like EG45" evidence="4">
    <location>
        <begin position="52"/>
        <end position="167"/>
    </location>
</feature>
<feature type="domain" description="Expansin-like CBD" evidence="3">
    <location>
        <begin position="177"/>
        <end position="256"/>
    </location>
</feature>
<feature type="disulfide bond" evidence="4">
    <location>
        <begin position="55"/>
        <end position="83"/>
    </location>
</feature>
<feature type="disulfide bond" evidence="4">
    <location>
        <begin position="86"/>
        <end position="162"/>
    </location>
</feature>
<feature type="disulfide bond" evidence="4">
    <location>
        <begin position="91"/>
        <end position="100"/>
    </location>
</feature>
<evidence type="ECO:0000250" key="1"/>
<evidence type="ECO:0000255" key="2"/>
<evidence type="ECO:0000255" key="3">
    <source>
        <dbReference type="PROSITE-ProRule" id="PRU00078"/>
    </source>
</evidence>
<evidence type="ECO:0000255" key="4">
    <source>
        <dbReference type="PROSITE-ProRule" id="PRU00079"/>
    </source>
</evidence>
<evidence type="ECO:0000269" key="5">
    <source>
    </source>
</evidence>
<evidence type="ECO:0000269" key="6">
    <source>
    </source>
</evidence>
<evidence type="ECO:0000269" key="7">
    <source>
    </source>
</evidence>
<evidence type="ECO:0000269" key="8">
    <source>
    </source>
</evidence>
<evidence type="ECO:0000269" key="9">
    <source>
    </source>
</evidence>
<evidence type="ECO:0000305" key="10"/>
<evidence type="ECO:0000312" key="11">
    <source>
        <dbReference type="EMBL" id="EAZ29409.1"/>
    </source>
</evidence>
<dbReference type="EMBL" id="Y07782">
    <property type="protein sequence ID" value="CAA69105.1"/>
    <property type="molecule type" value="mRNA"/>
</dbReference>
<dbReference type="EMBL" id="AF394543">
    <property type="protein sequence ID" value="AAL24479.1"/>
    <property type="molecule type" value="Genomic_DNA"/>
</dbReference>
<dbReference type="EMBL" id="AL731598">
    <property type="protein sequence ID" value="CAD39898.2"/>
    <property type="molecule type" value="Genomic_DNA"/>
</dbReference>
<dbReference type="EMBL" id="AP008210">
    <property type="protein sequence ID" value="BAF14203.1"/>
    <property type="molecule type" value="Genomic_DNA"/>
</dbReference>
<dbReference type="EMBL" id="AP014960">
    <property type="protein sequence ID" value="BAS88220.1"/>
    <property type="molecule type" value="Genomic_DNA"/>
</dbReference>
<dbReference type="EMBL" id="CM000140">
    <property type="protein sequence ID" value="EAZ29409.1"/>
    <property type="molecule type" value="Genomic_DNA"/>
</dbReference>
<dbReference type="EMBL" id="AK069548">
    <property type="protein sequence ID" value="BAG91484.1"/>
    <property type="molecule type" value="mRNA"/>
</dbReference>
<dbReference type="PIR" id="T03737">
    <property type="entry name" value="T03737"/>
</dbReference>
<dbReference type="RefSeq" id="XP_015634193.1">
    <property type="nucleotide sequence ID" value="XM_015778707.1"/>
</dbReference>
<dbReference type="SMR" id="Q7XWU8"/>
<dbReference type="FunCoup" id="Q7XWU8">
    <property type="interactions" value="14"/>
</dbReference>
<dbReference type="STRING" id="39947.Q7XWU8"/>
<dbReference type="PaxDb" id="39947-Q7XWU8"/>
<dbReference type="EnsemblPlants" id="Os04t0228400-01">
    <property type="protein sequence ID" value="Os04t0228400-01"/>
    <property type="gene ID" value="Os04g0228400"/>
</dbReference>
<dbReference type="Gramene" id="Os04t0228400-01">
    <property type="protein sequence ID" value="Os04t0228400-01"/>
    <property type="gene ID" value="Os04g0228400"/>
</dbReference>
<dbReference type="KEGG" id="dosa:Os04g0228400"/>
<dbReference type="eggNOG" id="ENOG502QVVV">
    <property type="taxonomic scope" value="Eukaryota"/>
</dbReference>
<dbReference type="HOGENOM" id="CLU_027462_0_1_1"/>
<dbReference type="InParanoid" id="Q7XWU8"/>
<dbReference type="OMA" id="RTSWMAM"/>
<dbReference type="OrthoDB" id="5823761at2759"/>
<dbReference type="Proteomes" id="UP000000763">
    <property type="component" value="Chromosome 4"/>
</dbReference>
<dbReference type="Proteomes" id="UP000007752">
    <property type="component" value="Chromosome 3"/>
</dbReference>
<dbReference type="Proteomes" id="UP000059680">
    <property type="component" value="Chromosome 4"/>
</dbReference>
<dbReference type="GO" id="GO:0005576">
    <property type="term" value="C:extracellular region"/>
    <property type="evidence" value="ECO:0007669"/>
    <property type="project" value="UniProtKB-KW"/>
</dbReference>
<dbReference type="GO" id="GO:0016020">
    <property type="term" value="C:membrane"/>
    <property type="evidence" value="ECO:0007669"/>
    <property type="project" value="UniProtKB-SubCell"/>
</dbReference>
<dbReference type="GO" id="GO:0009828">
    <property type="term" value="P:plant-type cell wall loosening"/>
    <property type="evidence" value="ECO:0000250"/>
    <property type="project" value="UniProtKB"/>
</dbReference>
<dbReference type="CDD" id="cd22274">
    <property type="entry name" value="DPBB_EXPA_N"/>
    <property type="match status" value="1"/>
</dbReference>
<dbReference type="FunFam" id="2.40.40.10:FF:000001">
    <property type="entry name" value="Expansin"/>
    <property type="match status" value="1"/>
</dbReference>
<dbReference type="FunFam" id="2.60.40.760:FF:000001">
    <property type="entry name" value="Expansin"/>
    <property type="match status" value="1"/>
</dbReference>
<dbReference type="Gene3D" id="2.60.40.760">
    <property type="entry name" value="Expansin, cellulose-binding-like domain"/>
    <property type="match status" value="1"/>
</dbReference>
<dbReference type="Gene3D" id="2.40.40.10">
    <property type="entry name" value="RlpA-like domain"/>
    <property type="match status" value="1"/>
</dbReference>
<dbReference type="InterPro" id="IPR007118">
    <property type="entry name" value="Expan_Lol_pI"/>
</dbReference>
<dbReference type="InterPro" id="IPR002963">
    <property type="entry name" value="Expansin"/>
</dbReference>
<dbReference type="InterPro" id="IPR007112">
    <property type="entry name" value="Expansin/allergen_DPBB_dom"/>
</dbReference>
<dbReference type="InterPro" id="IPR007117">
    <property type="entry name" value="Expansin_CBD"/>
</dbReference>
<dbReference type="InterPro" id="IPR036749">
    <property type="entry name" value="Expansin_CBD_sf"/>
</dbReference>
<dbReference type="InterPro" id="IPR009009">
    <property type="entry name" value="RlpA-like_DPBB"/>
</dbReference>
<dbReference type="InterPro" id="IPR036908">
    <property type="entry name" value="RlpA-like_sf"/>
</dbReference>
<dbReference type="PANTHER" id="PTHR31867">
    <property type="entry name" value="EXPANSIN-A15"/>
    <property type="match status" value="1"/>
</dbReference>
<dbReference type="Pfam" id="PF03330">
    <property type="entry name" value="DPBB_1"/>
    <property type="match status" value="1"/>
</dbReference>
<dbReference type="Pfam" id="PF01357">
    <property type="entry name" value="Expansin_C"/>
    <property type="match status" value="1"/>
</dbReference>
<dbReference type="PRINTS" id="PR01226">
    <property type="entry name" value="EXPANSIN"/>
</dbReference>
<dbReference type="PRINTS" id="PR01225">
    <property type="entry name" value="EXPANSNFAMLY"/>
</dbReference>
<dbReference type="SMART" id="SM00837">
    <property type="entry name" value="DPBB_1"/>
    <property type="match status" value="1"/>
</dbReference>
<dbReference type="SUPFAM" id="SSF50685">
    <property type="entry name" value="Barwin-like endoglucanases"/>
    <property type="match status" value="1"/>
</dbReference>
<dbReference type="SUPFAM" id="SSF49590">
    <property type="entry name" value="PHL pollen allergen"/>
    <property type="match status" value="1"/>
</dbReference>
<dbReference type="PROSITE" id="PS50843">
    <property type="entry name" value="EXPANSIN_CBD"/>
    <property type="match status" value="1"/>
</dbReference>
<dbReference type="PROSITE" id="PS50842">
    <property type="entry name" value="EXPANSIN_EG45"/>
    <property type="match status" value="1"/>
</dbReference>
<protein>
    <recommendedName>
        <fullName>Expansin-A1</fullName>
    </recommendedName>
    <alternativeName>
        <fullName>Alpha-expansin-1</fullName>
    </alternativeName>
    <alternativeName>
        <fullName>OsEXP1</fullName>
    </alternativeName>
    <alternativeName>
        <fullName>OsEXPA1</fullName>
    </alternativeName>
    <alternativeName>
        <fullName>OsaEXPa1.16</fullName>
    </alternativeName>
    <alternativeName>
        <fullName>RiExA</fullName>
    </alternativeName>
</protein>
<comment type="function">
    <text evidence="1">May cause loosening and extension of plant cell walls by disrupting non-covalent bonding between cellulose microfibrils and matrix glucans. No enzymatic activity has been found. May be required for rapid internodal elongation in deepwater rice during submergence (By similarity).</text>
</comment>
<comment type="subcellular location">
    <subcellularLocation>
        <location evidence="1">Secreted</location>
        <location evidence="1">Cell wall</location>
    </subcellularLocation>
    <subcellularLocation>
        <location evidence="1">Membrane</location>
        <topology evidence="1">Peripheral membrane protein</topology>
    </subcellularLocation>
</comment>
<comment type="tissue specificity">
    <text evidence="7 8 9">Expressed in adventitious root primordia, coleoptiles, shoot apex, leaf primordia, panicles and flowers.</text>
</comment>
<comment type="developmental stage">
    <text evidence="5 6 8">Expressed in the apical region (growing zone) of the root hair. Expressed in the basal growing zone of air-grown internode. Expressed in the growing region of leaves. Expressed in the developing seeds.</text>
</comment>
<comment type="induction">
    <text evidence="6 8">By gibberellin (GA3) and wounding.</text>
</comment>
<comment type="similarity">
    <text evidence="10">Belongs to the expansin family. Expansin A subfamily.</text>
</comment>
<comment type="online information" name="EXPANSIN homepage">
    <link uri="https://www.dept.psu.edu/biology/groups/expansins/index.htm"/>
</comment>
<sequence>MAGSSAATSCARFLALLATCLLWNEAASFTASGWNKAFATFYGGSDASGTMGGACGYGDLYSTGYGTNTAALSTVLFNDGASCGQCYRIMCDYQADRRFCISGTSVTITATNLCPPNYALPNDAGGWCNPPRQHFDMAEPAWLKIGVYVGGIVPVMYQRVPCAKQGGVRFTINGRDYFELVLVSNVGGVGSIQSVSIKGSRTGWMAMSRNWGVNWQSNAYLDGQSLSFKVTSSDGQTLTFLDVAPAGWTFGQTFSTSQQFS</sequence>
<organism>
    <name type="scientific">Oryza sativa subsp. japonica</name>
    <name type="common">Rice</name>
    <dbReference type="NCBI Taxonomy" id="39947"/>
    <lineage>
        <taxon>Eukaryota</taxon>
        <taxon>Viridiplantae</taxon>
        <taxon>Streptophyta</taxon>
        <taxon>Embryophyta</taxon>
        <taxon>Tracheophyta</taxon>
        <taxon>Spermatophyta</taxon>
        <taxon>Magnoliopsida</taxon>
        <taxon>Liliopsida</taxon>
        <taxon>Poales</taxon>
        <taxon>Poaceae</taxon>
        <taxon>BOP clade</taxon>
        <taxon>Oryzoideae</taxon>
        <taxon>Oryzeae</taxon>
        <taxon>Oryzinae</taxon>
        <taxon>Oryza</taxon>
        <taxon>Oryza sativa</taxon>
    </lineage>
</organism>
<reference key="1">
    <citation type="journal article" date="1997" name="Plant Cell">
        <title>Expression of expansin genes is correlated with growth in deepwater rice.</title>
        <authorList>
            <person name="Cho H.-T."/>
            <person name="Kende H."/>
        </authorList>
    </citation>
    <scope>NUCLEOTIDE SEQUENCE [MRNA]</scope>
    <scope>TISSUE SPECIFICITY</scope>
    <scope>DEVELOPMENTAL STAGE</scope>
    <scope>INDUCTION</scope>
    <source>
        <strain>cv. Nipponbare</strain>
        <tissue>Shoot</tissue>
    </source>
</reference>
<reference key="2">
    <citation type="journal article" date="2002" name="Plant Physiol.">
        <title>Expression of alpha-expansin and expansin-like genes in deepwater rice.</title>
        <authorList>
            <person name="Lee Y."/>
            <person name="Kende H."/>
        </authorList>
    </citation>
    <scope>NUCLEOTIDE SEQUENCE [GENOMIC DNA]</scope>
    <scope>DEVELOPMENTAL STAGE</scope>
    <scope>INDUCTION</scope>
</reference>
<reference key="3">
    <citation type="journal article" date="2002" name="Nature">
        <title>Sequence and analysis of rice chromosome 4.</title>
        <authorList>
            <person name="Feng Q."/>
            <person name="Zhang Y."/>
            <person name="Hao P."/>
            <person name="Wang S."/>
            <person name="Fu G."/>
            <person name="Huang Y."/>
            <person name="Li Y."/>
            <person name="Zhu J."/>
            <person name="Liu Y."/>
            <person name="Hu X."/>
            <person name="Jia P."/>
            <person name="Zhang Y."/>
            <person name="Zhao Q."/>
            <person name="Ying K."/>
            <person name="Yu S."/>
            <person name="Tang Y."/>
            <person name="Weng Q."/>
            <person name="Zhang L."/>
            <person name="Lu Y."/>
            <person name="Mu J."/>
            <person name="Lu Y."/>
            <person name="Zhang L.S."/>
            <person name="Yu Z."/>
            <person name="Fan D."/>
            <person name="Liu X."/>
            <person name="Lu T."/>
            <person name="Li C."/>
            <person name="Wu Y."/>
            <person name="Sun T."/>
            <person name="Lei H."/>
            <person name="Li T."/>
            <person name="Hu H."/>
            <person name="Guan J."/>
            <person name="Wu M."/>
            <person name="Zhang R."/>
            <person name="Zhou B."/>
            <person name="Chen Z."/>
            <person name="Chen L."/>
            <person name="Jin Z."/>
            <person name="Wang R."/>
            <person name="Yin H."/>
            <person name="Cai Z."/>
            <person name="Ren S."/>
            <person name="Lv G."/>
            <person name="Gu W."/>
            <person name="Zhu G."/>
            <person name="Tu Y."/>
            <person name="Jia J."/>
            <person name="Zhang Y."/>
            <person name="Chen J."/>
            <person name="Kang H."/>
            <person name="Chen X."/>
            <person name="Shao C."/>
            <person name="Sun Y."/>
            <person name="Hu Q."/>
            <person name="Zhang X."/>
            <person name="Zhang W."/>
            <person name="Wang L."/>
            <person name="Ding C."/>
            <person name="Sheng H."/>
            <person name="Gu J."/>
            <person name="Chen S."/>
            <person name="Ni L."/>
            <person name="Zhu F."/>
            <person name="Chen W."/>
            <person name="Lan L."/>
            <person name="Lai Y."/>
            <person name="Cheng Z."/>
            <person name="Gu M."/>
            <person name="Jiang J."/>
            <person name="Li J."/>
            <person name="Hong G."/>
            <person name="Xue Y."/>
            <person name="Han B."/>
        </authorList>
    </citation>
    <scope>NUCLEOTIDE SEQUENCE [LARGE SCALE GENOMIC DNA]</scope>
    <source>
        <strain>cv. Nipponbare</strain>
    </source>
</reference>
<reference key="4">
    <citation type="journal article" date="2005" name="Nature">
        <title>The map-based sequence of the rice genome.</title>
        <authorList>
            <consortium name="International rice genome sequencing project (IRGSP)"/>
        </authorList>
    </citation>
    <scope>NUCLEOTIDE SEQUENCE [LARGE SCALE GENOMIC DNA]</scope>
    <source>
        <strain>cv. Nipponbare</strain>
    </source>
</reference>
<reference key="5">
    <citation type="journal article" date="2008" name="Nucleic Acids Res.">
        <title>The rice annotation project database (RAP-DB): 2008 update.</title>
        <authorList>
            <consortium name="The rice annotation project (RAP)"/>
        </authorList>
    </citation>
    <scope>GENOME REANNOTATION</scope>
    <source>
        <strain>cv. Nipponbare</strain>
    </source>
</reference>
<reference key="6">
    <citation type="journal article" date="2013" name="Rice">
        <title>Improvement of the Oryza sativa Nipponbare reference genome using next generation sequence and optical map data.</title>
        <authorList>
            <person name="Kawahara Y."/>
            <person name="de la Bastide M."/>
            <person name="Hamilton J.P."/>
            <person name="Kanamori H."/>
            <person name="McCombie W.R."/>
            <person name="Ouyang S."/>
            <person name="Schwartz D.C."/>
            <person name="Tanaka T."/>
            <person name="Wu J."/>
            <person name="Zhou S."/>
            <person name="Childs K.L."/>
            <person name="Davidson R.M."/>
            <person name="Lin H."/>
            <person name="Quesada-Ocampo L."/>
            <person name="Vaillancourt B."/>
            <person name="Sakai H."/>
            <person name="Lee S.S."/>
            <person name="Kim J."/>
            <person name="Numa H."/>
            <person name="Itoh T."/>
            <person name="Buell C.R."/>
            <person name="Matsumoto T."/>
        </authorList>
    </citation>
    <scope>GENOME REANNOTATION</scope>
    <source>
        <strain>cv. Nipponbare</strain>
    </source>
</reference>
<reference key="7">
    <citation type="journal article" date="2005" name="PLoS Biol.">
        <title>The genomes of Oryza sativa: a history of duplications.</title>
        <authorList>
            <person name="Yu J."/>
            <person name="Wang J."/>
            <person name="Lin W."/>
            <person name="Li S."/>
            <person name="Li H."/>
            <person name="Zhou J."/>
            <person name="Ni P."/>
            <person name="Dong W."/>
            <person name="Hu S."/>
            <person name="Zeng C."/>
            <person name="Zhang J."/>
            <person name="Zhang Y."/>
            <person name="Li R."/>
            <person name="Xu Z."/>
            <person name="Li S."/>
            <person name="Li X."/>
            <person name="Zheng H."/>
            <person name="Cong L."/>
            <person name="Lin L."/>
            <person name="Yin J."/>
            <person name="Geng J."/>
            <person name="Li G."/>
            <person name="Shi J."/>
            <person name="Liu J."/>
            <person name="Lv H."/>
            <person name="Li J."/>
            <person name="Wang J."/>
            <person name="Deng Y."/>
            <person name="Ran L."/>
            <person name="Shi X."/>
            <person name="Wang X."/>
            <person name="Wu Q."/>
            <person name="Li C."/>
            <person name="Ren X."/>
            <person name="Wang J."/>
            <person name="Wang X."/>
            <person name="Li D."/>
            <person name="Liu D."/>
            <person name="Zhang X."/>
            <person name="Ji Z."/>
            <person name="Zhao W."/>
            <person name="Sun Y."/>
            <person name="Zhang Z."/>
            <person name="Bao J."/>
            <person name="Han Y."/>
            <person name="Dong L."/>
            <person name="Ji J."/>
            <person name="Chen P."/>
            <person name="Wu S."/>
            <person name="Liu J."/>
            <person name="Xiao Y."/>
            <person name="Bu D."/>
            <person name="Tan J."/>
            <person name="Yang L."/>
            <person name="Ye C."/>
            <person name="Zhang J."/>
            <person name="Xu J."/>
            <person name="Zhou Y."/>
            <person name="Yu Y."/>
            <person name="Zhang B."/>
            <person name="Zhuang S."/>
            <person name="Wei H."/>
            <person name="Liu B."/>
            <person name="Lei M."/>
            <person name="Yu H."/>
            <person name="Li Y."/>
            <person name="Xu H."/>
            <person name="Wei S."/>
            <person name="He X."/>
            <person name="Fang L."/>
            <person name="Zhang Z."/>
            <person name="Zhang Y."/>
            <person name="Huang X."/>
            <person name="Su Z."/>
            <person name="Tong W."/>
            <person name="Li J."/>
            <person name="Tong Z."/>
            <person name="Li S."/>
            <person name="Ye J."/>
            <person name="Wang L."/>
            <person name="Fang L."/>
            <person name="Lei T."/>
            <person name="Chen C.-S."/>
            <person name="Chen H.-C."/>
            <person name="Xu Z."/>
            <person name="Li H."/>
            <person name="Huang H."/>
            <person name="Zhang F."/>
            <person name="Xu H."/>
            <person name="Li N."/>
            <person name="Zhao C."/>
            <person name="Li S."/>
            <person name="Dong L."/>
            <person name="Huang Y."/>
            <person name="Li L."/>
            <person name="Xi Y."/>
            <person name="Qi Q."/>
            <person name="Li W."/>
            <person name="Zhang B."/>
            <person name="Hu W."/>
            <person name="Zhang Y."/>
            <person name="Tian X."/>
            <person name="Jiao Y."/>
            <person name="Liang X."/>
            <person name="Jin J."/>
            <person name="Gao L."/>
            <person name="Zheng W."/>
            <person name="Hao B."/>
            <person name="Liu S.-M."/>
            <person name="Wang W."/>
            <person name="Yuan L."/>
            <person name="Cao M."/>
            <person name="McDermott J."/>
            <person name="Samudrala R."/>
            <person name="Wang J."/>
            <person name="Wong G.K.-S."/>
            <person name="Yang H."/>
        </authorList>
    </citation>
    <scope>NUCLEOTIDE SEQUENCE [LARGE SCALE GENOMIC DNA]</scope>
    <source>
        <strain>cv. Nipponbare</strain>
    </source>
</reference>
<reference key="8">
    <citation type="journal article" date="2003" name="Science">
        <title>Collection, mapping, and annotation of over 28,000 cDNA clones from japonica rice.</title>
        <authorList>
            <consortium name="The rice full-length cDNA consortium"/>
        </authorList>
    </citation>
    <scope>NUCLEOTIDE SEQUENCE [LARGE SCALE MRNA]</scope>
    <source>
        <strain>cv. Nipponbare</strain>
    </source>
</reference>
<reference key="9">
    <citation type="journal article" date="1998" name="Plant J.">
        <title>Tissue localization of expansins in deepwater rice.</title>
        <authorList>
            <person name="Cho H.-T."/>
            <person name="Kende H."/>
        </authorList>
    </citation>
    <scope>TISSUE SPECIFICITY</scope>
</reference>
<reference key="10">
    <citation type="journal article" date="2000" name="Planta">
        <title>Expression of alpha-expansin genes in young seedlings of rice (Oryza sativa L.).</title>
        <authorList>
            <person name="Huang J."/>
            <person name="Takano T."/>
            <person name="Akita S."/>
        </authorList>
    </citation>
    <scope>DEVELOPMENTAL STAGE</scope>
</reference>
<reference key="11">
    <citation type="journal article" date="2004" name="Plant Mol. Biol.">
        <title>Nomenclature for members of the expansin superfamily of genes and proteins.</title>
        <authorList>
            <person name="Kende H."/>
            <person name="Bradford K.J."/>
            <person name="Brummell D.A."/>
            <person name="Cho H.-T."/>
            <person name="Cosgrove D.J."/>
            <person name="Fleming A.J."/>
            <person name="Gehring C."/>
            <person name="Lee Y."/>
            <person name="McQueen-Mason S.J."/>
            <person name="Rose J.K.C."/>
            <person name="Voesenek L.A.C."/>
        </authorList>
    </citation>
    <scope>NOMENCLATURE</scope>
</reference>
<reference key="12">
    <citation type="journal article" date="2005" name="Mol. Cells">
        <title>Characterization and transcriptional expression of the alpha-expansin gene family in rice.</title>
        <authorList>
            <person name="Shin J.-H."/>
            <person name="Jeong D.-H."/>
            <person name="Park M.C."/>
            <person name="An G."/>
        </authorList>
    </citation>
    <scope>TISSUE SPECIFICITY</scope>
</reference>
<name>EXPA1_ORYSJ</name>
<accession>Q7XWU8</accession>
<accession>A3AQ20</accession>
<accession>O24208</accession>
<gene>
    <name type="primary">EXPA1</name>
    <name type="synonym">EXP1</name>
    <name type="ordered locus">Os04g0228400</name>
    <name type="ordered locus">LOC_Os04g15840</name>
    <name evidence="11" type="ORF">OsJ_13482</name>
    <name type="ORF">OSJNBa0065B15.2</name>
</gene>